<protein>
    <recommendedName>
        <fullName evidence="1">Hydroxymethylglutaryl-CoA synthase</fullName>
        <shortName evidence="1">HMG-CoA synthase</shortName>
        <shortName evidence="1">HMGCS</shortName>
        <ecNumber evidence="1">2.3.3.10</ecNumber>
    </recommendedName>
</protein>
<proteinExistence type="inferred from homology"/>
<sequence>MRKLLKPVKDVGIVGYGAYVPKYRIKAEEIGRVWGVSSFPIEEKAVPGLDEDALTIGIEAARNALKRARIDPKLIRAVWFGSESKPYAVKPTGTVIAEAIGATPDVSTADFEFACKAGTEALQTAIGFVGSGMADYAMAIGADTAQGRPGDHLEFTAGAGGAAFIVGEKSSETVAYFEGSYSYVTDTPDFWRRQHEHYPRHGNRFTGEPAYFHHIINAAKTLMEELGLTVNDFDYAVFHQPNVKFPLTVAKILGIPKEKVLPGLLTGIIGNTYSGATMVGVSAVLDIAKPGDRILWVSFGSGAGSDAFSIVVQDAIEEKRDLAPKTMDYVNRKKYIDYALYAKARRKYIM</sequence>
<reference key="1">
    <citation type="journal article" date="2008" name="J. Bacteriol.">
        <title>The complete genome sequence of Thermococcus onnurineus NA1 reveals a mixed heterotrophic and carboxydotrophic metabolism.</title>
        <authorList>
            <person name="Lee H.S."/>
            <person name="Kang S.G."/>
            <person name="Bae S.S."/>
            <person name="Lim J.K."/>
            <person name="Cho Y."/>
            <person name="Kim Y.J."/>
            <person name="Jeon J.H."/>
            <person name="Cha S.-S."/>
            <person name="Kwon K.K."/>
            <person name="Kim H.-T."/>
            <person name="Park C.-J."/>
            <person name="Lee H.-W."/>
            <person name="Kim S.I."/>
            <person name="Chun J."/>
            <person name="Colwell R.R."/>
            <person name="Kim S.-J."/>
            <person name="Lee J.-H."/>
        </authorList>
    </citation>
    <scope>NUCLEOTIDE SEQUENCE [LARGE SCALE GENOMIC DNA]</scope>
    <source>
        <strain>NA1</strain>
    </source>
</reference>
<name>HMGCS_THEON</name>
<evidence type="ECO:0000255" key="1">
    <source>
        <dbReference type="HAMAP-Rule" id="MF_01409"/>
    </source>
</evidence>
<accession>B6YXH7</accession>
<feature type="chain" id="PRO_1000145511" description="Hydroxymethylglutaryl-CoA synthase">
    <location>
        <begin position="1"/>
        <end position="350"/>
    </location>
</feature>
<feature type="active site" description="Proton donor/acceptor" evidence="1">
    <location>
        <position position="83"/>
    </location>
</feature>
<feature type="active site" description="Acyl-thioester intermediate" evidence="1">
    <location>
        <position position="115"/>
    </location>
</feature>
<feature type="active site" description="Proton donor/acceptor" evidence="1">
    <location>
        <position position="239"/>
    </location>
</feature>
<feature type="binding site" evidence="1">
    <location>
        <position position="115"/>
    </location>
    <ligand>
        <name>(3S)-3-hydroxy-3-methylglutaryl-CoA</name>
        <dbReference type="ChEBI" id="CHEBI:43074"/>
    </ligand>
</feature>
<feature type="binding site" evidence="1">
    <location>
        <position position="156"/>
    </location>
    <ligand>
        <name>(3S)-3-hydroxy-3-methylglutaryl-CoA</name>
        <dbReference type="ChEBI" id="CHEBI:43074"/>
    </ligand>
</feature>
<feature type="binding site" evidence="1">
    <location>
        <position position="204"/>
    </location>
    <ligand>
        <name>CoA</name>
        <dbReference type="ChEBI" id="CHEBI:57287"/>
        <note>ligand shared with acetoacetyl-CoA thiolase</note>
    </ligand>
</feature>
<feature type="binding site" evidence="1">
    <location>
        <position position="206"/>
    </location>
    <ligand>
        <name>(3S)-3-hydroxy-3-methylglutaryl-CoA</name>
        <dbReference type="ChEBI" id="CHEBI:43074"/>
    </ligand>
</feature>
<feature type="binding site" evidence="1">
    <location>
        <position position="239"/>
    </location>
    <ligand>
        <name>(3S)-3-hydroxy-3-methylglutaryl-CoA</name>
        <dbReference type="ChEBI" id="CHEBI:43074"/>
    </ligand>
</feature>
<feature type="binding site" evidence="1">
    <location>
        <position position="244"/>
    </location>
    <ligand>
        <name>CoA</name>
        <dbReference type="ChEBI" id="CHEBI:57287"/>
        <note>ligand shared with acetoacetyl-CoA thiolase</note>
    </ligand>
</feature>
<feature type="binding site" evidence="1">
    <location>
        <position position="271"/>
    </location>
    <ligand>
        <name>(3S)-3-hydroxy-3-methylglutaryl-CoA</name>
        <dbReference type="ChEBI" id="CHEBI:43074"/>
    </ligand>
</feature>
<feature type="binding site" evidence="1">
    <location>
        <position position="301"/>
    </location>
    <ligand>
        <name>(3S)-3-hydroxy-3-methylglutaryl-CoA</name>
        <dbReference type="ChEBI" id="CHEBI:43074"/>
    </ligand>
</feature>
<gene>
    <name type="ordered locus">TON_1301</name>
</gene>
<organism>
    <name type="scientific">Thermococcus onnurineus (strain NA1)</name>
    <dbReference type="NCBI Taxonomy" id="523850"/>
    <lineage>
        <taxon>Archaea</taxon>
        <taxon>Methanobacteriati</taxon>
        <taxon>Methanobacteriota</taxon>
        <taxon>Thermococci</taxon>
        <taxon>Thermococcales</taxon>
        <taxon>Thermococcaceae</taxon>
        <taxon>Thermococcus</taxon>
    </lineage>
</organism>
<keyword id="KW-0012">Acyltransferase</keyword>
<keyword id="KW-0414">Isoprene biosynthesis</keyword>
<keyword id="KW-0808">Transferase</keyword>
<dbReference type="EC" id="2.3.3.10" evidence="1"/>
<dbReference type="EMBL" id="CP000855">
    <property type="protein sequence ID" value="ACJ16790.1"/>
    <property type="molecule type" value="Genomic_DNA"/>
</dbReference>
<dbReference type="RefSeq" id="WP_012572262.1">
    <property type="nucleotide sequence ID" value="NC_011529.1"/>
</dbReference>
<dbReference type="SMR" id="B6YXH7"/>
<dbReference type="STRING" id="523850.TON_1301"/>
<dbReference type="GeneID" id="7018328"/>
<dbReference type="KEGG" id="ton:TON_1301"/>
<dbReference type="PATRIC" id="fig|523850.10.peg.1308"/>
<dbReference type="eggNOG" id="arCOG01767">
    <property type="taxonomic scope" value="Archaea"/>
</dbReference>
<dbReference type="HOGENOM" id="CLU_039592_7_0_2"/>
<dbReference type="OrthoDB" id="5812at2157"/>
<dbReference type="UniPathway" id="UPA00058">
    <property type="reaction ID" value="UER00102"/>
</dbReference>
<dbReference type="Proteomes" id="UP000002727">
    <property type="component" value="Chromosome"/>
</dbReference>
<dbReference type="GO" id="GO:0003985">
    <property type="term" value="F:acetyl-CoA C-acetyltransferase activity"/>
    <property type="evidence" value="ECO:0007669"/>
    <property type="project" value="UniProtKB-UniRule"/>
</dbReference>
<dbReference type="GO" id="GO:0004421">
    <property type="term" value="F:hydroxymethylglutaryl-CoA synthase activity"/>
    <property type="evidence" value="ECO:0007669"/>
    <property type="project" value="InterPro"/>
</dbReference>
<dbReference type="GO" id="GO:0010142">
    <property type="term" value="P:farnesyl diphosphate biosynthetic process, mevalonate pathway"/>
    <property type="evidence" value="ECO:0007669"/>
    <property type="project" value="TreeGrafter"/>
</dbReference>
<dbReference type="GO" id="GO:0019287">
    <property type="term" value="P:isopentenyl diphosphate biosynthetic process, mevalonate pathway"/>
    <property type="evidence" value="ECO:0007669"/>
    <property type="project" value="UniProtKB-UniRule"/>
</dbReference>
<dbReference type="CDD" id="cd00827">
    <property type="entry name" value="init_cond_enzymes"/>
    <property type="match status" value="1"/>
</dbReference>
<dbReference type="FunFam" id="3.40.47.10:FF:000046">
    <property type="entry name" value="UPF0219 protein M1627_1703"/>
    <property type="match status" value="1"/>
</dbReference>
<dbReference type="Gene3D" id="3.40.47.10">
    <property type="match status" value="1"/>
</dbReference>
<dbReference type="HAMAP" id="MF_01409">
    <property type="entry name" value="HMG_CoA_synth_arch"/>
    <property type="match status" value="1"/>
</dbReference>
<dbReference type="InterPro" id="IPR013747">
    <property type="entry name" value="ACP_syn_III_C"/>
</dbReference>
<dbReference type="InterPro" id="IPR004656">
    <property type="entry name" value="HMG_CoA_Synthase"/>
</dbReference>
<dbReference type="InterPro" id="IPR016039">
    <property type="entry name" value="Thiolase-like"/>
</dbReference>
<dbReference type="NCBIfam" id="TIGR00748">
    <property type="entry name" value="HMG_CoA_syn_Arc"/>
    <property type="match status" value="1"/>
</dbReference>
<dbReference type="NCBIfam" id="NF003274">
    <property type="entry name" value="PRK04262.1"/>
    <property type="match status" value="1"/>
</dbReference>
<dbReference type="PANTHER" id="PTHR43323">
    <property type="entry name" value="3-HYDROXY-3-METHYLGLUTARYL COENZYME A SYNTHASE"/>
    <property type="match status" value="1"/>
</dbReference>
<dbReference type="PANTHER" id="PTHR43323:SF2">
    <property type="entry name" value="HYDROXYMETHYLGLUTARYL-COA SYNTHASE"/>
    <property type="match status" value="1"/>
</dbReference>
<dbReference type="Pfam" id="PF08541">
    <property type="entry name" value="ACP_syn_III_C"/>
    <property type="match status" value="1"/>
</dbReference>
<dbReference type="SUPFAM" id="SSF53901">
    <property type="entry name" value="Thiolase-like"/>
    <property type="match status" value="2"/>
</dbReference>
<comment type="function">
    <text evidence="1">Catalyzes the condensation of acetyl-CoA with acetoacetyl-CoA to form 3-hydroxy-3-methylglutaryl-CoA (HMG-CoA). Functions in the mevalonate (MVA) pathway leading to isopentenyl diphosphate (IPP), a key precursor for the biosynthesis of isoprenoid compounds that are building blocks of archaeal membrane lipids.</text>
</comment>
<comment type="catalytic activity">
    <reaction evidence="1">
        <text>acetoacetyl-CoA + acetyl-CoA + H2O = (3S)-3-hydroxy-3-methylglutaryl-CoA + CoA + H(+)</text>
        <dbReference type="Rhea" id="RHEA:10188"/>
        <dbReference type="ChEBI" id="CHEBI:15377"/>
        <dbReference type="ChEBI" id="CHEBI:15378"/>
        <dbReference type="ChEBI" id="CHEBI:43074"/>
        <dbReference type="ChEBI" id="CHEBI:57286"/>
        <dbReference type="ChEBI" id="CHEBI:57287"/>
        <dbReference type="ChEBI" id="CHEBI:57288"/>
        <dbReference type="EC" id="2.3.3.10"/>
    </reaction>
    <physiologicalReaction direction="left-to-right" evidence="1">
        <dbReference type="Rhea" id="RHEA:10189"/>
    </physiologicalReaction>
</comment>
<comment type="pathway">
    <text evidence="1">Metabolic intermediate biosynthesis; (R)-mevalonate biosynthesis; (R)-mevalonate from acetyl-CoA: step 2/3.</text>
</comment>
<comment type="subunit">
    <text evidence="1">Interacts with acetoacetyl-CoA thiolase that catalyzes the precedent step in the pathway and with a DUF35 protein. The acetoacetyl-CoA thiolase/HMG-CoA synthase complex channels the intermediate via a fused CoA-binding site, which allows for efficient coupling of the endergonic thiolase reaction with the exergonic HMGCS reaction.</text>
</comment>
<comment type="similarity">
    <text evidence="1">Belongs to the thiolase-like superfamily. Archaeal HMG-CoA synthase family.</text>
</comment>